<keyword id="KW-0520">NAD</keyword>
<keyword id="KW-0560">Oxidoreductase</keyword>
<keyword id="KW-1185">Reference proteome</keyword>
<comment type="catalytic activity">
    <reaction evidence="2">
        <text>a primary alcohol + NAD(+) = an aldehyde + NADH + H(+)</text>
        <dbReference type="Rhea" id="RHEA:10736"/>
        <dbReference type="ChEBI" id="CHEBI:15378"/>
        <dbReference type="ChEBI" id="CHEBI:15734"/>
        <dbReference type="ChEBI" id="CHEBI:17478"/>
        <dbReference type="ChEBI" id="CHEBI:57540"/>
        <dbReference type="ChEBI" id="CHEBI:57945"/>
        <dbReference type="EC" id="1.1.1.1"/>
    </reaction>
</comment>
<comment type="catalytic activity">
    <reaction evidence="2">
        <text>a secondary alcohol + NAD(+) = a ketone + NADH + H(+)</text>
        <dbReference type="Rhea" id="RHEA:10740"/>
        <dbReference type="ChEBI" id="CHEBI:15378"/>
        <dbReference type="ChEBI" id="CHEBI:17087"/>
        <dbReference type="ChEBI" id="CHEBI:35681"/>
        <dbReference type="ChEBI" id="CHEBI:57540"/>
        <dbReference type="ChEBI" id="CHEBI:57945"/>
        <dbReference type="EC" id="1.1.1.1"/>
    </reaction>
</comment>
<comment type="subunit">
    <text>Homodimer.</text>
</comment>
<comment type="similarity">
    <text evidence="7">Belongs to the short-chain dehydrogenases/reductases (SDR) family.</text>
</comment>
<feature type="initiator methionine" description="Removed">
    <location>
        <position position="1"/>
    </location>
</feature>
<feature type="chain" id="PRO_0000054479" description="Alcohol dehydrogenase 2">
    <location>
        <begin position="2"/>
        <end position="254"/>
    </location>
</feature>
<feature type="active site" description="Proton acceptor" evidence="2">
    <location>
        <position position="151"/>
    </location>
</feature>
<feature type="binding site" evidence="1">
    <location>
        <begin position="10"/>
        <end position="33"/>
    </location>
    <ligand>
        <name>NAD(+)</name>
        <dbReference type="ChEBI" id="CHEBI:57540"/>
    </ligand>
</feature>
<feature type="binding site" evidence="1">
    <location>
        <position position="138"/>
    </location>
    <ligand>
        <name>substrate</name>
    </ligand>
</feature>
<feature type="sequence variant" description="In strain: MJBC 95.1, MJS 93 and VRF." evidence="3 4 5 6">
    <original>R</original>
    <variation>S</variation>
    <location>
        <position position="28"/>
    </location>
</feature>
<feature type="sequence variant" description="In strain: MJBC 33.3." evidence="3">
    <original>T</original>
    <variation>S</variation>
    <location>
        <position position="71"/>
    </location>
</feature>
<feature type="sequence variant" description="In strain: VRF." evidence="4 6">
    <original>A</original>
    <variation>T</variation>
    <location>
        <position position="92"/>
    </location>
</feature>
<feature type="sequence variant" description="In strain: MJS 115, MJS 147.2F, MJS 16F, MJS 122, MJS 127, MJS 132, MJS 14, MJS 154, MJS 36, MJS 58.2, MJS 68, MJS 84 and MJS 87." evidence="5">
    <original>H</original>
    <variation>Y</variation>
    <location>
        <position position="98"/>
    </location>
</feature>
<feature type="sequence variant" description="In strain: VRF." evidence="4 6">
    <original>V</original>
    <variation>L</variation>
    <location>
        <position position="112"/>
    </location>
</feature>
<feature type="sequence variant" description="In strain: MJS 115, MJS 122, MJS 127, MJS 132, MJS 133, MJS 14, MJS 147.2F, MJS 154, MJS 16F, MJS 36, MJS 58.2, MJS 68, MJS 84, MJS 87, MJS 93 and VRF." evidence="4 5 6">
    <original>I</original>
    <variation>T</variation>
    <location>
        <position position="115"/>
    </location>
</feature>
<feature type="sequence variant" description="In strain: MJS 115, MJS 122, MJS 127, MJS 132, MJS 133, MJS 14, MJS 147.2F, MJS 154, MJS 16F, MJS 36, MJS 58.2, MJS 68, MJS 84, MJS 87, MJS 93 and VRF." evidence="4 5 6">
    <original>V</original>
    <variation>I</variation>
    <location>
        <position position="136"/>
    </location>
</feature>
<feature type="sequence variant" description="In strain: VRF." evidence="4 6">
    <original>Y</original>
    <variation>L</variation>
    <location>
        <position position="146"/>
    </location>
</feature>
<feature type="sequence variant" description="In strain: VRF." evidence="4 6">
    <original>Q</original>
    <variation>P</variation>
    <location>
        <position position="147"/>
    </location>
</feature>
<feature type="sequence variant" description="In strain: VRF." evidence="4 6">
    <original>E</original>
    <variation>Q</variation>
    <location>
        <position position="226"/>
    </location>
</feature>
<feature type="sequence variant" description="In strain: MJS 115, MJS 122, MJS 127, MJS 132, MJS 133, MJS 14, MJS 147.2F, MJS 154, MJS 16F, MJS 36, MJS 58.2, MJS 68, MJS 84, MJS 87, MJS 93 and VRF." evidence="4 5 6">
    <original>V</original>
    <variation>L</variation>
    <location>
        <position position="236"/>
    </location>
</feature>
<protein>
    <recommendedName>
        <fullName>Alcohol dehydrogenase 2</fullName>
        <ecNumber>1.1.1.1</ecNumber>
    </recommendedName>
</protein>
<name>ADH2_DROMO</name>
<gene>
    <name type="primary">Adh2</name>
    <name type="ORF">GI17643</name>
</gene>
<sequence>MAIANKNIIFVAGLGGIGFDTSREIVKRGPKNLVILDRIENPAAIAELKALNPKVTVTFYPYDVTVSVAETTKLLKTIFDKLKTVDLLINGAGILDDHQIERTIAVNFTGTVNTITAIMSFWDKRKGGPGGVIANVCSVTGFNAIYQVPVYSASKAAALSFTNSLARLAPITGVTAYSINPGITKTTLVHKFNSWLDVEPRVAELLLEHPTQTTLQCAQNFVKAIEANQNGAIWKVDLGTLEAIEWTKHWDSHI</sequence>
<organism>
    <name type="scientific">Drosophila mojavensis</name>
    <name type="common">Fruit fly</name>
    <dbReference type="NCBI Taxonomy" id="7230"/>
    <lineage>
        <taxon>Eukaryota</taxon>
        <taxon>Metazoa</taxon>
        <taxon>Ecdysozoa</taxon>
        <taxon>Arthropoda</taxon>
        <taxon>Hexapoda</taxon>
        <taxon>Insecta</taxon>
        <taxon>Pterygota</taxon>
        <taxon>Neoptera</taxon>
        <taxon>Endopterygota</taxon>
        <taxon>Diptera</taxon>
        <taxon>Brachycera</taxon>
        <taxon>Muscomorpha</taxon>
        <taxon>Ephydroidea</taxon>
        <taxon>Drosophilidae</taxon>
        <taxon>Drosophila</taxon>
    </lineage>
</organism>
<proteinExistence type="inferred from homology"/>
<evidence type="ECO:0000250" key="1"/>
<evidence type="ECO:0000255" key="2">
    <source>
        <dbReference type="PROSITE-ProRule" id="PRU10001"/>
    </source>
</evidence>
<evidence type="ECO:0000269" key="3">
    <source>
    </source>
</evidence>
<evidence type="ECO:0000269" key="4">
    <source>
    </source>
</evidence>
<evidence type="ECO:0000269" key="5">
    <source>
    </source>
</evidence>
<evidence type="ECO:0000269" key="6">
    <source>
    </source>
</evidence>
<evidence type="ECO:0000305" key="7"/>
<dbReference type="EC" id="1.1.1.1"/>
<dbReference type="EMBL" id="M37276">
    <property type="protein sequence ID" value="AAA28334.1"/>
    <property type="molecule type" value="Genomic_DNA"/>
</dbReference>
<dbReference type="EMBL" id="X12536">
    <property type="protein sequence ID" value="CAA31054.1"/>
    <property type="molecule type" value="Genomic_DNA"/>
</dbReference>
<dbReference type="EMBL" id="AY154864">
    <property type="protein sequence ID" value="AAN86900.1"/>
    <property type="molecule type" value="Genomic_DNA"/>
</dbReference>
<dbReference type="EMBL" id="AY154865">
    <property type="protein sequence ID" value="AAN86901.1"/>
    <property type="molecule type" value="Genomic_DNA"/>
</dbReference>
<dbReference type="EMBL" id="AY154866">
    <property type="protein sequence ID" value="AAN86902.1"/>
    <property type="molecule type" value="Genomic_DNA"/>
</dbReference>
<dbReference type="EMBL" id="AY154867">
    <property type="protein sequence ID" value="AAN86903.1"/>
    <property type="molecule type" value="Genomic_DNA"/>
</dbReference>
<dbReference type="EMBL" id="AY154868">
    <property type="protein sequence ID" value="AAN86904.1"/>
    <property type="molecule type" value="Genomic_DNA"/>
</dbReference>
<dbReference type="EMBL" id="AY154869">
    <property type="protein sequence ID" value="AAN86905.1"/>
    <property type="molecule type" value="Genomic_DNA"/>
</dbReference>
<dbReference type="EMBL" id="AY154870">
    <property type="protein sequence ID" value="AAN86906.1"/>
    <property type="molecule type" value="Genomic_DNA"/>
</dbReference>
<dbReference type="EMBL" id="AY154871">
    <property type="protein sequence ID" value="AAN86907.1"/>
    <property type="molecule type" value="Genomic_DNA"/>
</dbReference>
<dbReference type="EMBL" id="AY154872">
    <property type="protein sequence ID" value="AAN86908.1"/>
    <property type="molecule type" value="Genomic_DNA"/>
</dbReference>
<dbReference type="EMBL" id="AY154873">
    <property type="protein sequence ID" value="AAN86909.1"/>
    <property type="molecule type" value="Genomic_DNA"/>
</dbReference>
<dbReference type="EMBL" id="AY154874">
    <property type="protein sequence ID" value="AAN86910.1"/>
    <property type="molecule type" value="Genomic_DNA"/>
</dbReference>
<dbReference type="EMBL" id="AY154875">
    <property type="protein sequence ID" value="AAN86911.1"/>
    <property type="molecule type" value="Genomic_DNA"/>
</dbReference>
<dbReference type="EMBL" id="AY154876">
    <property type="protein sequence ID" value="AAN86912.1"/>
    <property type="molecule type" value="Genomic_DNA"/>
</dbReference>
<dbReference type="EMBL" id="AY364508">
    <property type="protein sequence ID" value="AAR21255.1"/>
    <property type="molecule type" value="Genomic_DNA"/>
</dbReference>
<dbReference type="EMBL" id="AY364509">
    <property type="protein sequence ID" value="AAR21256.1"/>
    <property type="molecule type" value="Genomic_DNA"/>
</dbReference>
<dbReference type="EMBL" id="AY364510">
    <property type="protein sequence ID" value="AAR21257.1"/>
    <property type="molecule type" value="Genomic_DNA"/>
</dbReference>
<dbReference type="EMBL" id="AY364511">
    <property type="protein sequence ID" value="AAR21258.1"/>
    <property type="molecule type" value="Genomic_DNA"/>
</dbReference>
<dbReference type="EMBL" id="AY364512">
    <property type="protein sequence ID" value="AAR21259.1"/>
    <property type="molecule type" value="Genomic_DNA"/>
</dbReference>
<dbReference type="EMBL" id="AY364513">
    <property type="protein sequence ID" value="AAR21260.1"/>
    <property type="molecule type" value="Genomic_DNA"/>
</dbReference>
<dbReference type="EMBL" id="AY364514">
    <property type="protein sequence ID" value="AAR21261.1"/>
    <property type="molecule type" value="Genomic_DNA"/>
</dbReference>
<dbReference type="EMBL" id="AY364515">
    <property type="protein sequence ID" value="AAR21262.1"/>
    <property type="molecule type" value="Genomic_DNA"/>
</dbReference>
<dbReference type="EMBL" id="AY364516">
    <property type="protein sequence ID" value="AAR21263.1"/>
    <property type="molecule type" value="Genomic_DNA"/>
</dbReference>
<dbReference type="EMBL" id="AY364517">
    <property type="protein sequence ID" value="AAR21264.1"/>
    <property type="molecule type" value="Genomic_DNA"/>
</dbReference>
<dbReference type="EMBL" id="AY364518">
    <property type="protein sequence ID" value="AAR21265.1"/>
    <property type="molecule type" value="Genomic_DNA"/>
</dbReference>
<dbReference type="EMBL" id="AY364519">
    <property type="protein sequence ID" value="AAR21266.1"/>
    <property type="molecule type" value="Genomic_DNA"/>
</dbReference>
<dbReference type="EMBL" id="AY364520">
    <property type="protein sequence ID" value="AAR21267.1"/>
    <property type="molecule type" value="Genomic_DNA"/>
</dbReference>
<dbReference type="EMBL" id="AY364521">
    <property type="protein sequence ID" value="AAR21268.1"/>
    <property type="molecule type" value="Genomic_DNA"/>
</dbReference>
<dbReference type="EMBL" id="AY364522">
    <property type="protein sequence ID" value="AAR21269.1"/>
    <property type="molecule type" value="Genomic_DNA"/>
</dbReference>
<dbReference type="EMBL" id="CH933807">
    <property type="protein sequence ID" value="EDW12371.1"/>
    <property type="molecule type" value="Genomic_DNA"/>
</dbReference>
<dbReference type="PIR" id="S01901">
    <property type="entry name" value="S01901"/>
</dbReference>
<dbReference type="SMR" id="P09369"/>
<dbReference type="FunCoup" id="P09369">
    <property type="interactions" value="288"/>
</dbReference>
<dbReference type="EnsemblMetazoa" id="FBtr0168368">
    <property type="protein sequence ID" value="FBpp0166860"/>
    <property type="gene ID" value="FBgn0012567"/>
</dbReference>
<dbReference type="EnsemblMetazoa" id="XM_002002893.4">
    <property type="protein sequence ID" value="XP_002002929.1"/>
    <property type="gene ID" value="LOC6576952"/>
</dbReference>
<dbReference type="GeneID" id="6576952"/>
<dbReference type="KEGG" id="dmo:Dmoj_GI17643"/>
<dbReference type="eggNOG" id="KOG4169">
    <property type="taxonomic scope" value="Eukaryota"/>
</dbReference>
<dbReference type="HOGENOM" id="CLU_010194_2_16_1"/>
<dbReference type="InParanoid" id="P09369"/>
<dbReference type="OMA" id="WSKHWDS"/>
<dbReference type="OrthoDB" id="417891at2759"/>
<dbReference type="PhylomeDB" id="P09369"/>
<dbReference type="Proteomes" id="UP000009192">
    <property type="component" value="Unassembled WGS sequence"/>
</dbReference>
<dbReference type="GO" id="GO:0005737">
    <property type="term" value="C:cytoplasm"/>
    <property type="evidence" value="ECO:0007669"/>
    <property type="project" value="TreeGrafter"/>
</dbReference>
<dbReference type="GO" id="GO:0004022">
    <property type="term" value="F:alcohol dehydrogenase (NAD+) activity"/>
    <property type="evidence" value="ECO:0007669"/>
    <property type="project" value="UniProtKB-EC"/>
</dbReference>
<dbReference type="GO" id="GO:0006066">
    <property type="term" value="P:alcohol metabolic process"/>
    <property type="evidence" value="ECO:0007669"/>
    <property type="project" value="InterPro"/>
</dbReference>
<dbReference type="CDD" id="cd05323">
    <property type="entry name" value="ADH_SDR_c_like"/>
    <property type="match status" value="1"/>
</dbReference>
<dbReference type="FunFam" id="3.40.50.720:FF:000302">
    <property type="entry name" value="Alcohol dehydrogenase"/>
    <property type="match status" value="1"/>
</dbReference>
<dbReference type="Gene3D" id="3.40.50.720">
    <property type="entry name" value="NAD(P)-binding Rossmann-like Domain"/>
    <property type="match status" value="1"/>
</dbReference>
<dbReference type="InterPro" id="IPR002425">
    <property type="entry name" value="ADH_Drosophila-type"/>
</dbReference>
<dbReference type="InterPro" id="IPR036291">
    <property type="entry name" value="NAD(P)-bd_dom_sf"/>
</dbReference>
<dbReference type="InterPro" id="IPR020904">
    <property type="entry name" value="Sc_DH/Rdtase_CS"/>
</dbReference>
<dbReference type="InterPro" id="IPR002347">
    <property type="entry name" value="SDR_fam"/>
</dbReference>
<dbReference type="PANTHER" id="PTHR44229">
    <property type="entry name" value="15-HYDROXYPROSTAGLANDIN DEHYDROGENASE [NAD(+)]"/>
    <property type="match status" value="1"/>
</dbReference>
<dbReference type="PANTHER" id="PTHR44229:SF8">
    <property type="entry name" value="ALCOHOL DEHYDROGENASE-RELATED"/>
    <property type="match status" value="1"/>
</dbReference>
<dbReference type="Pfam" id="PF00106">
    <property type="entry name" value="adh_short"/>
    <property type="match status" value="1"/>
</dbReference>
<dbReference type="PRINTS" id="PR01168">
    <property type="entry name" value="ALCDHDRGNASE"/>
</dbReference>
<dbReference type="PRINTS" id="PR01167">
    <property type="entry name" value="INSADHFAMILY"/>
</dbReference>
<dbReference type="PRINTS" id="PR00080">
    <property type="entry name" value="SDRFAMILY"/>
</dbReference>
<dbReference type="SUPFAM" id="SSF51735">
    <property type="entry name" value="NAD(P)-binding Rossmann-fold domains"/>
    <property type="match status" value="1"/>
</dbReference>
<dbReference type="PROSITE" id="PS00061">
    <property type="entry name" value="ADH_SHORT"/>
    <property type="match status" value="1"/>
</dbReference>
<accession>P09369</accession>
<accession>Q6YFE3</accession>
<accession>Q867G0</accession>
<accession>Q86LV9</accession>
<reference key="1">
    <citation type="journal article" date="1988" name="Genetics">
        <title>Structure and evolution of the Adh genes of Drosophila mojavensis.</title>
        <authorList>
            <person name="Atkinson P.W."/>
            <person name="Mills L.E."/>
            <person name="Starmer W.T."/>
            <person name="Sullivan D.T."/>
        </authorList>
    </citation>
    <scope>NUCLEOTIDE SEQUENCE [GENOMIC DNA]</scope>
    <scope>VARIANTS SER-28; THR-92; LEU-112; THR-115; ILE-136; LEU-146; PRO-147; GLN-226 AND LEU-236</scope>
    <source>
        <strain>VRF</strain>
    </source>
</reference>
<reference key="2">
    <citation type="journal article" date="1992" name="Genetics">
        <title>Delineation of cis-acting sequences required for expression of Drosophila mojavensis Adh-1.</title>
        <authorList>
            <person name="Bayer C.A."/>
            <person name="Curtiss S.W."/>
            <person name="Weaver J.A."/>
            <person name="Sullivan D.T."/>
        </authorList>
    </citation>
    <scope>NUCLEOTIDE SEQUENCE [GENOMIC DNA]</scope>
    <scope>VARIANTS SER-28; THR-92; LEU-112; THR-115; ILE-136; LEU-146; PRO-147; GLN-226 AND LEU-236</scope>
    <source>
        <strain>VRF</strain>
    </source>
</reference>
<reference key="3">
    <citation type="journal article" date="2003" name="Genetics">
        <title>Sequence variation of alcohol dehydrogenase (Adh) paralogs in cactophilic Drosophila.</title>
        <authorList>
            <person name="Matzkin L.M."/>
            <person name="Eanes W.F."/>
        </authorList>
    </citation>
    <scope>NUCLEOTIDE SEQUENCE [GENOMIC DNA]</scope>
    <scope>VARIANTS SER-28 AND SER-71</scope>
    <source>
        <strain>MJBC 103.3</strain>
        <strain>MJBC 108.5</strain>
        <strain>MJBC 115.4</strain>
        <strain>MJBC 157.3</strain>
        <strain>MJBC 202.2</strain>
        <strain>MJBC 205.1</strain>
        <strain>MJBC 25.3</strain>
        <strain>MJBC 33.3</strain>
        <strain>MJBC 35.1</strain>
        <strain>MJBC 39.3</strain>
        <strain>MJBC 47.3</strain>
        <strain>MJBC 80</strain>
        <strain>MJBC 95.1</strain>
    </source>
</reference>
<reference key="4">
    <citation type="journal article" date="2004" name="Mol. Biol. Evol.">
        <title>Population genetics and geographic variation of alcohol dehydrogenase (Adh) paralogs and glucose-6-phosphate dehydrogenase (G6pd) in Drosophila mojavensis.</title>
        <authorList>
            <person name="Matzkin L.M."/>
        </authorList>
    </citation>
    <scope>NUCLEOTIDE SEQUENCE [GENOMIC DNA]</scope>
    <scope>VARIANTS SER-28; TYR-98; THR-115; ILE-136 AND LEU-236</scope>
    <source>
        <strain>MJS 115</strain>
        <strain>MJS 122</strain>
        <strain>MJS 127</strain>
        <strain>MJS 132</strain>
        <strain>MJS 133</strain>
        <strain>MJS 14</strain>
        <strain>MJS 147.2F</strain>
        <strain>MJS 154</strain>
        <strain>MJS 16F</strain>
        <strain>MJS 36</strain>
        <strain>MJS 58.2</strain>
        <strain>MJS 68</strain>
        <strain>MJS 84</strain>
        <strain>MJS 87</strain>
        <strain>MJS 93</strain>
    </source>
</reference>
<reference key="5">
    <citation type="journal article" date="2007" name="Nature">
        <title>Evolution of genes and genomes on the Drosophila phylogeny.</title>
        <authorList>
            <consortium name="Drosophila 12 genomes consortium"/>
        </authorList>
    </citation>
    <scope>NUCLEOTIDE SEQUENCE [LARGE SCALE GENOMIC DNA]</scope>
    <source>
        <strain>Tucson 15081-1352.22</strain>
    </source>
</reference>